<organism>
    <name type="scientific">Brucella canis (strain ATCC 23365 / NCTC 10854 / RM-666)</name>
    <dbReference type="NCBI Taxonomy" id="483179"/>
    <lineage>
        <taxon>Bacteria</taxon>
        <taxon>Pseudomonadati</taxon>
        <taxon>Pseudomonadota</taxon>
        <taxon>Alphaproteobacteria</taxon>
        <taxon>Hyphomicrobiales</taxon>
        <taxon>Brucellaceae</taxon>
        <taxon>Brucella/Ochrobactrum group</taxon>
        <taxon>Brucella</taxon>
    </lineage>
</organism>
<reference key="1">
    <citation type="submission" date="2007-10" db="EMBL/GenBank/DDBJ databases">
        <title>Brucella canis ATCC 23365 whole genome shotgun sequencing project.</title>
        <authorList>
            <person name="Setubal J.C."/>
            <person name="Bowns C."/>
            <person name="Boyle S."/>
            <person name="Crasta O.R."/>
            <person name="Czar M.J."/>
            <person name="Dharmanolla C."/>
            <person name="Gillespie J.J."/>
            <person name="Kenyon R.W."/>
            <person name="Lu J."/>
            <person name="Mane S."/>
            <person name="Mohapatra S."/>
            <person name="Nagrani S."/>
            <person name="Purkayastha A."/>
            <person name="Rajasimha H.K."/>
            <person name="Shallom J.M."/>
            <person name="Shallom S."/>
            <person name="Shukla M."/>
            <person name="Snyder E.E."/>
            <person name="Sobral B.W."/>
            <person name="Wattam A.R."/>
            <person name="Will R."/>
            <person name="Williams K."/>
            <person name="Yoo H."/>
            <person name="Bruce D."/>
            <person name="Detter C."/>
            <person name="Munk C."/>
            <person name="Brettin T.S."/>
        </authorList>
    </citation>
    <scope>NUCLEOTIDE SEQUENCE [LARGE SCALE GENOMIC DNA]</scope>
    <source>
        <strain>ATCC 23365 / NCTC 10854 / RM-666</strain>
    </source>
</reference>
<evidence type="ECO:0000255" key="1">
    <source>
        <dbReference type="HAMAP-Rule" id="MF_00197"/>
    </source>
</evidence>
<evidence type="ECO:0000256" key="2">
    <source>
        <dbReference type="SAM" id="MobiDB-lite"/>
    </source>
</evidence>
<proteinExistence type="inferred from homology"/>
<feature type="chain" id="PRO_1000077691" description="Diaminopimelate epimerase">
    <location>
        <begin position="1"/>
        <end position="303"/>
    </location>
</feature>
<feature type="region of interest" description="Disordered" evidence="2">
    <location>
        <begin position="279"/>
        <end position="303"/>
    </location>
</feature>
<feature type="active site" description="Proton donor" evidence="1">
    <location>
        <position position="76"/>
    </location>
</feature>
<feature type="active site" description="Proton acceptor" evidence="1">
    <location>
        <position position="224"/>
    </location>
</feature>
<feature type="binding site" evidence="1">
    <location>
        <position position="15"/>
    </location>
    <ligand>
        <name>substrate</name>
    </ligand>
</feature>
<feature type="binding site" evidence="1">
    <location>
        <position position="47"/>
    </location>
    <ligand>
        <name>substrate</name>
    </ligand>
</feature>
<feature type="binding site" evidence="1">
    <location>
        <position position="67"/>
    </location>
    <ligand>
        <name>substrate</name>
    </ligand>
</feature>
<feature type="binding site" evidence="1">
    <location>
        <begin position="77"/>
        <end position="78"/>
    </location>
    <ligand>
        <name>substrate</name>
    </ligand>
</feature>
<feature type="binding site" evidence="1">
    <location>
        <position position="163"/>
    </location>
    <ligand>
        <name>substrate</name>
    </ligand>
</feature>
<feature type="binding site" evidence="1">
    <location>
        <position position="197"/>
    </location>
    <ligand>
        <name>substrate</name>
    </ligand>
</feature>
<feature type="binding site" evidence="1">
    <location>
        <begin position="215"/>
        <end position="216"/>
    </location>
    <ligand>
        <name>substrate</name>
    </ligand>
</feature>
<feature type="binding site" evidence="1">
    <location>
        <begin position="225"/>
        <end position="226"/>
    </location>
    <ligand>
        <name>substrate</name>
    </ligand>
</feature>
<feature type="site" description="Could be important to modulate the pK values of the two catalytic cysteine residues" evidence="1">
    <location>
        <position position="165"/>
    </location>
</feature>
<feature type="site" description="Could be important to modulate the pK values of the two catalytic cysteine residues" evidence="1">
    <location>
        <position position="215"/>
    </location>
</feature>
<dbReference type="EC" id="5.1.1.7" evidence="1"/>
<dbReference type="EMBL" id="CP000872">
    <property type="protein sequence ID" value="ABX62966.1"/>
    <property type="molecule type" value="Genomic_DNA"/>
</dbReference>
<dbReference type="RefSeq" id="WP_004692109.1">
    <property type="nucleotide sequence ID" value="NC_010103.1"/>
</dbReference>
<dbReference type="SMR" id="A9M8R8"/>
<dbReference type="GeneID" id="55591520"/>
<dbReference type="KEGG" id="bcs:BCAN_A1976"/>
<dbReference type="HOGENOM" id="CLU_053306_1_0_5"/>
<dbReference type="PhylomeDB" id="A9M8R8"/>
<dbReference type="UniPathway" id="UPA00034">
    <property type="reaction ID" value="UER00025"/>
</dbReference>
<dbReference type="Proteomes" id="UP000001385">
    <property type="component" value="Chromosome I"/>
</dbReference>
<dbReference type="GO" id="GO:0005829">
    <property type="term" value="C:cytosol"/>
    <property type="evidence" value="ECO:0007669"/>
    <property type="project" value="TreeGrafter"/>
</dbReference>
<dbReference type="GO" id="GO:0008837">
    <property type="term" value="F:diaminopimelate epimerase activity"/>
    <property type="evidence" value="ECO:0007669"/>
    <property type="project" value="UniProtKB-UniRule"/>
</dbReference>
<dbReference type="GO" id="GO:0009089">
    <property type="term" value="P:lysine biosynthetic process via diaminopimelate"/>
    <property type="evidence" value="ECO:0007669"/>
    <property type="project" value="UniProtKB-UniRule"/>
</dbReference>
<dbReference type="Gene3D" id="3.10.310.10">
    <property type="entry name" value="Diaminopimelate Epimerase, Chain A, domain 1"/>
    <property type="match status" value="2"/>
</dbReference>
<dbReference type="HAMAP" id="MF_00197">
    <property type="entry name" value="DAP_epimerase"/>
    <property type="match status" value="1"/>
</dbReference>
<dbReference type="InterPro" id="IPR018510">
    <property type="entry name" value="DAP_epimerase_AS"/>
</dbReference>
<dbReference type="InterPro" id="IPR001653">
    <property type="entry name" value="DAP_epimerase_DapF"/>
</dbReference>
<dbReference type="NCBIfam" id="TIGR00652">
    <property type="entry name" value="DapF"/>
    <property type="match status" value="1"/>
</dbReference>
<dbReference type="PANTHER" id="PTHR31689:SF0">
    <property type="entry name" value="DIAMINOPIMELATE EPIMERASE"/>
    <property type="match status" value="1"/>
</dbReference>
<dbReference type="PANTHER" id="PTHR31689">
    <property type="entry name" value="DIAMINOPIMELATE EPIMERASE, CHLOROPLASTIC"/>
    <property type="match status" value="1"/>
</dbReference>
<dbReference type="Pfam" id="PF01678">
    <property type="entry name" value="DAP_epimerase"/>
    <property type="match status" value="2"/>
</dbReference>
<dbReference type="SUPFAM" id="SSF54506">
    <property type="entry name" value="Diaminopimelate epimerase-like"/>
    <property type="match status" value="2"/>
</dbReference>
<dbReference type="PROSITE" id="PS01326">
    <property type="entry name" value="DAP_EPIMERASE"/>
    <property type="match status" value="1"/>
</dbReference>
<accession>A9M8R8</accession>
<gene>
    <name evidence="1" type="primary">dapF</name>
    <name type="ordered locus">BCAN_A1976</name>
</gene>
<comment type="function">
    <text evidence="1">Catalyzes the stereoinversion of LL-2,6-diaminopimelate (L,L-DAP) to meso-diaminopimelate (meso-DAP), a precursor of L-lysine and an essential component of the bacterial peptidoglycan.</text>
</comment>
<comment type="catalytic activity">
    <reaction evidence="1">
        <text>(2S,6S)-2,6-diaminopimelate = meso-2,6-diaminopimelate</text>
        <dbReference type="Rhea" id="RHEA:15393"/>
        <dbReference type="ChEBI" id="CHEBI:57609"/>
        <dbReference type="ChEBI" id="CHEBI:57791"/>
        <dbReference type="EC" id="5.1.1.7"/>
    </reaction>
</comment>
<comment type="pathway">
    <text evidence="1">Amino-acid biosynthesis; L-lysine biosynthesis via DAP pathway; DL-2,6-diaminopimelate from LL-2,6-diaminopimelate: step 1/1.</text>
</comment>
<comment type="subunit">
    <text evidence="1">Homodimer.</text>
</comment>
<comment type="subcellular location">
    <subcellularLocation>
        <location evidence="1">Cytoplasm</location>
    </subcellularLocation>
</comment>
<comment type="similarity">
    <text evidence="1">Belongs to the diaminopimelate epimerase family.</text>
</comment>
<name>DAPF_BRUC2</name>
<sequence>MATKAAFARMNGLGNQIIVADMRGRADSITSAAAIRLASDSETAFDQIMAIHDPRTPGTDYYIAIINCDGTQAQACGNGTRCVVQALAAETGRHAFTFETRAGILTATEHDDGLISVDMGTPRFDWQDIPLAQAVADTRKIELQVGPADAPVLHSPSIASMGNPHAVFWVDKDVWSYELDKFGPLLENHPIFPERANISIAHVTSSDTIDLRTWERGAGLTRACGSAACAAAVSAARTGRTGRKVTVNVPGGPLLIEWRDDDHVMMTGPAEWEFSGTFDPATGEWSRDTQGLQGSGNADRGTA</sequence>
<protein>
    <recommendedName>
        <fullName evidence="1">Diaminopimelate epimerase</fullName>
        <shortName evidence="1">DAP epimerase</shortName>
        <ecNumber evidence="1">5.1.1.7</ecNumber>
    </recommendedName>
    <alternativeName>
        <fullName evidence="1">PLP-independent amino acid racemase</fullName>
    </alternativeName>
</protein>
<keyword id="KW-0028">Amino-acid biosynthesis</keyword>
<keyword id="KW-0963">Cytoplasm</keyword>
<keyword id="KW-0413">Isomerase</keyword>
<keyword id="KW-0457">Lysine biosynthesis</keyword>
<keyword id="KW-1185">Reference proteome</keyword>